<dbReference type="EMBL" id="AM286415">
    <property type="protein sequence ID" value="CAL12445.1"/>
    <property type="molecule type" value="Genomic_DNA"/>
</dbReference>
<dbReference type="RefSeq" id="WP_011816524.1">
    <property type="nucleotide sequence ID" value="NC_008800.1"/>
</dbReference>
<dbReference type="RefSeq" id="YP_001006612.1">
    <property type="nucleotide sequence ID" value="NC_008800.1"/>
</dbReference>
<dbReference type="SMR" id="A1JRJ9"/>
<dbReference type="KEGG" id="yen:YE2393"/>
<dbReference type="PATRIC" id="fig|393305.7.peg.2547"/>
<dbReference type="eggNOG" id="COG0632">
    <property type="taxonomic scope" value="Bacteria"/>
</dbReference>
<dbReference type="HOGENOM" id="CLU_087936_0_0_6"/>
<dbReference type="OrthoDB" id="5293449at2"/>
<dbReference type="Proteomes" id="UP000000642">
    <property type="component" value="Chromosome"/>
</dbReference>
<dbReference type="GO" id="GO:0005737">
    <property type="term" value="C:cytoplasm"/>
    <property type="evidence" value="ECO:0007669"/>
    <property type="project" value="UniProtKB-SubCell"/>
</dbReference>
<dbReference type="GO" id="GO:0009379">
    <property type="term" value="C:Holliday junction helicase complex"/>
    <property type="evidence" value="ECO:0007669"/>
    <property type="project" value="InterPro"/>
</dbReference>
<dbReference type="GO" id="GO:0048476">
    <property type="term" value="C:Holliday junction resolvase complex"/>
    <property type="evidence" value="ECO:0007669"/>
    <property type="project" value="UniProtKB-UniRule"/>
</dbReference>
<dbReference type="GO" id="GO:0005524">
    <property type="term" value="F:ATP binding"/>
    <property type="evidence" value="ECO:0007669"/>
    <property type="project" value="InterPro"/>
</dbReference>
<dbReference type="GO" id="GO:0000400">
    <property type="term" value="F:four-way junction DNA binding"/>
    <property type="evidence" value="ECO:0007669"/>
    <property type="project" value="UniProtKB-UniRule"/>
</dbReference>
<dbReference type="GO" id="GO:0009378">
    <property type="term" value="F:four-way junction helicase activity"/>
    <property type="evidence" value="ECO:0007669"/>
    <property type="project" value="InterPro"/>
</dbReference>
<dbReference type="GO" id="GO:0006310">
    <property type="term" value="P:DNA recombination"/>
    <property type="evidence" value="ECO:0007669"/>
    <property type="project" value="UniProtKB-UniRule"/>
</dbReference>
<dbReference type="GO" id="GO:0006281">
    <property type="term" value="P:DNA repair"/>
    <property type="evidence" value="ECO:0007669"/>
    <property type="project" value="UniProtKB-UniRule"/>
</dbReference>
<dbReference type="CDD" id="cd14332">
    <property type="entry name" value="UBA_RuvA_C"/>
    <property type="match status" value="1"/>
</dbReference>
<dbReference type="FunFam" id="1.10.150.20:FF:000012">
    <property type="entry name" value="Holliday junction ATP-dependent DNA helicase RuvA"/>
    <property type="match status" value="1"/>
</dbReference>
<dbReference type="FunFam" id="2.40.50.140:FF:000083">
    <property type="entry name" value="Holliday junction ATP-dependent DNA helicase RuvA"/>
    <property type="match status" value="1"/>
</dbReference>
<dbReference type="Gene3D" id="1.10.150.20">
    <property type="entry name" value="5' to 3' exonuclease, C-terminal subdomain"/>
    <property type="match status" value="1"/>
</dbReference>
<dbReference type="Gene3D" id="1.10.8.10">
    <property type="entry name" value="DNA helicase RuvA subunit, C-terminal domain"/>
    <property type="match status" value="1"/>
</dbReference>
<dbReference type="Gene3D" id="2.40.50.140">
    <property type="entry name" value="Nucleic acid-binding proteins"/>
    <property type="match status" value="1"/>
</dbReference>
<dbReference type="HAMAP" id="MF_00031">
    <property type="entry name" value="DNA_HJ_migration_RuvA"/>
    <property type="match status" value="1"/>
</dbReference>
<dbReference type="InterPro" id="IPR013849">
    <property type="entry name" value="DNA_helicase_Holl-junc_RuvA_I"/>
</dbReference>
<dbReference type="InterPro" id="IPR003583">
    <property type="entry name" value="Hlx-hairpin-Hlx_DNA-bd_motif"/>
</dbReference>
<dbReference type="InterPro" id="IPR012340">
    <property type="entry name" value="NA-bd_OB-fold"/>
</dbReference>
<dbReference type="InterPro" id="IPR000085">
    <property type="entry name" value="RuvA"/>
</dbReference>
<dbReference type="InterPro" id="IPR010994">
    <property type="entry name" value="RuvA_2-like"/>
</dbReference>
<dbReference type="InterPro" id="IPR011114">
    <property type="entry name" value="RuvA_C"/>
</dbReference>
<dbReference type="InterPro" id="IPR036267">
    <property type="entry name" value="RuvA_C_sf"/>
</dbReference>
<dbReference type="NCBIfam" id="TIGR00084">
    <property type="entry name" value="ruvA"/>
    <property type="match status" value="1"/>
</dbReference>
<dbReference type="Pfam" id="PF14520">
    <property type="entry name" value="HHH_5"/>
    <property type="match status" value="1"/>
</dbReference>
<dbReference type="Pfam" id="PF07499">
    <property type="entry name" value="RuvA_C"/>
    <property type="match status" value="1"/>
</dbReference>
<dbReference type="Pfam" id="PF01330">
    <property type="entry name" value="RuvA_N"/>
    <property type="match status" value="1"/>
</dbReference>
<dbReference type="SMART" id="SM00278">
    <property type="entry name" value="HhH1"/>
    <property type="match status" value="2"/>
</dbReference>
<dbReference type="SUPFAM" id="SSF46929">
    <property type="entry name" value="DNA helicase RuvA subunit, C-terminal domain"/>
    <property type="match status" value="1"/>
</dbReference>
<dbReference type="SUPFAM" id="SSF50249">
    <property type="entry name" value="Nucleic acid-binding proteins"/>
    <property type="match status" value="1"/>
</dbReference>
<dbReference type="SUPFAM" id="SSF47781">
    <property type="entry name" value="RuvA domain 2-like"/>
    <property type="match status" value="1"/>
</dbReference>
<reference key="1">
    <citation type="journal article" date="2006" name="PLoS Genet.">
        <title>The complete genome sequence and comparative genome analysis of the high pathogenicity Yersinia enterocolitica strain 8081.</title>
        <authorList>
            <person name="Thomson N.R."/>
            <person name="Howard S."/>
            <person name="Wren B.W."/>
            <person name="Holden M.T.G."/>
            <person name="Crossman L."/>
            <person name="Challis G.L."/>
            <person name="Churcher C."/>
            <person name="Mungall K."/>
            <person name="Brooks K."/>
            <person name="Chillingworth T."/>
            <person name="Feltwell T."/>
            <person name="Abdellah Z."/>
            <person name="Hauser H."/>
            <person name="Jagels K."/>
            <person name="Maddison M."/>
            <person name="Moule S."/>
            <person name="Sanders M."/>
            <person name="Whitehead S."/>
            <person name="Quail M.A."/>
            <person name="Dougan G."/>
            <person name="Parkhill J."/>
            <person name="Prentice M.B."/>
        </authorList>
    </citation>
    <scope>NUCLEOTIDE SEQUENCE [LARGE SCALE GENOMIC DNA]</scope>
    <source>
        <strain>NCTC 13174 / 8081</strain>
    </source>
</reference>
<feature type="chain" id="PRO_1000002594" description="Holliday junction branch migration complex subunit RuvA">
    <location>
        <begin position="1"/>
        <end position="205"/>
    </location>
</feature>
<feature type="region of interest" description="Domain I" evidence="1">
    <location>
        <begin position="1"/>
        <end position="64"/>
    </location>
</feature>
<feature type="region of interest" description="Domain II" evidence="1">
    <location>
        <begin position="65"/>
        <end position="143"/>
    </location>
</feature>
<feature type="region of interest" description="Flexible linker" evidence="1">
    <location>
        <begin position="144"/>
        <end position="156"/>
    </location>
</feature>
<feature type="region of interest" description="Domain III" evidence="1">
    <location>
        <begin position="157"/>
        <end position="205"/>
    </location>
</feature>
<sequence>MIGRLRGIILEKQPPLVLLETNGVGYEVQLPMTCFYELPDIGQEAIIFTQFVVREDAQLLYGFNDKQERALFRELIKVNGVGPKLALAILSGMSAQQFVAAVEREDITTLVKLPGVGKKTAERLVVEMKDRFKGLNGDLFNNTGDIQLPASNSSQISDADIEAEAASALVALGYKPQEASRLVSKIAKPGADCETLIRDALRAAL</sequence>
<organism>
    <name type="scientific">Yersinia enterocolitica serotype O:8 / biotype 1B (strain NCTC 13174 / 8081)</name>
    <dbReference type="NCBI Taxonomy" id="393305"/>
    <lineage>
        <taxon>Bacteria</taxon>
        <taxon>Pseudomonadati</taxon>
        <taxon>Pseudomonadota</taxon>
        <taxon>Gammaproteobacteria</taxon>
        <taxon>Enterobacterales</taxon>
        <taxon>Yersiniaceae</taxon>
        <taxon>Yersinia</taxon>
    </lineage>
</organism>
<name>RUVA_YERE8</name>
<evidence type="ECO:0000255" key="1">
    <source>
        <dbReference type="HAMAP-Rule" id="MF_00031"/>
    </source>
</evidence>
<keyword id="KW-0963">Cytoplasm</keyword>
<keyword id="KW-0227">DNA damage</keyword>
<keyword id="KW-0233">DNA recombination</keyword>
<keyword id="KW-0234">DNA repair</keyword>
<keyword id="KW-0238">DNA-binding</keyword>
<comment type="function">
    <text evidence="1">The RuvA-RuvB-RuvC complex processes Holliday junction (HJ) DNA during genetic recombination and DNA repair, while the RuvA-RuvB complex plays an important role in the rescue of blocked DNA replication forks via replication fork reversal (RFR). RuvA specifically binds to HJ cruciform DNA, conferring on it an open structure. The RuvB hexamer acts as an ATP-dependent pump, pulling dsDNA into and through the RuvAB complex. HJ branch migration allows RuvC to scan DNA until it finds its consensus sequence, where it cleaves and resolves the cruciform DNA.</text>
</comment>
<comment type="subunit">
    <text evidence="1">Homotetramer. Forms an RuvA(8)-RuvB(12)-Holliday junction (HJ) complex. HJ DNA is sandwiched between 2 RuvA tetramers; dsDNA enters through RuvA and exits via RuvB. An RuvB hexamer assembles on each DNA strand where it exits the tetramer. Each RuvB hexamer is contacted by two RuvA subunits (via domain III) on 2 adjacent RuvB subunits; this complex drives branch migration. In the full resolvosome a probable DNA-RuvA(4)-RuvB(12)-RuvC(2) complex forms which resolves the HJ.</text>
</comment>
<comment type="subcellular location">
    <subcellularLocation>
        <location evidence="1">Cytoplasm</location>
    </subcellularLocation>
</comment>
<comment type="domain">
    <text evidence="1">Has three domains with a flexible linker between the domains II and III and assumes an 'L' shape. Domain III is highly mobile and contacts RuvB.</text>
</comment>
<comment type="similarity">
    <text evidence="1">Belongs to the RuvA family.</text>
</comment>
<protein>
    <recommendedName>
        <fullName evidence="1">Holliday junction branch migration complex subunit RuvA</fullName>
    </recommendedName>
</protein>
<gene>
    <name evidence="1" type="primary">ruvA</name>
    <name type="ordered locus">YE2393</name>
</gene>
<proteinExistence type="inferred from homology"/>
<accession>A1JRJ9</accession>